<feature type="chain" id="PRO_0000291627" description="Large ribosomal subunit protein eL18">
    <location>
        <begin position="1"/>
        <end position="188"/>
    </location>
</feature>
<feature type="region of interest" description="Disordered" evidence="2">
    <location>
        <begin position="147"/>
        <end position="188"/>
    </location>
</feature>
<feature type="compositionally biased region" description="Basic residues" evidence="2">
    <location>
        <begin position="161"/>
        <end position="171"/>
    </location>
</feature>
<feature type="compositionally biased region" description="Basic residues" evidence="2">
    <location>
        <begin position="178"/>
        <end position="188"/>
    </location>
</feature>
<reference key="1">
    <citation type="submission" date="2006-06" db="EMBL/GenBank/DDBJ databases">
        <title>Ribosomal proteins of the Asian citrus psyllid, Diaphorina citri.</title>
        <authorList>
            <person name="Hunter W.B."/>
            <person name="Hunnicutt L.E."/>
            <person name="Hall D.G."/>
        </authorList>
    </citation>
    <scope>NUCLEOTIDE SEQUENCE [MRNA]</scope>
</reference>
<keyword id="KW-0963">Cytoplasm</keyword>
<keyword id="KW-1185">Reference proteome</keyword>
<keyword id="KW-0687">Ribonucleoprotein</keyword>
<keyword id="KW-0689">Ribosomal protein</keyword>
<name>RL18_DIACI</name>
<comment type="subcellular location">
    <subcellularLocation>
        <location evidence="1">Cytoplasm</location>
    </subcellularLocation>
</comment>
<comment type="similarity">
    <text evidence="3">Belongs to the eukaryotic ribosomal protein eL18 family.</text>
</comment>
<proteinExistence type="evidence at transcript level"/>
<evidence type="ECO:0000250" key="1"/>
<evidence type="ECO:0000256" key="2">
    <source>
        <dbReference type="SAM" id="MobiDB-lite"/>
    </source>
</evidence>
<evidence type="ECO:0000305" key="3"/>
<organism>
    <name type="scientific">Diaphorina citri</name>
    <name type="common">Asian citrus psyllid</name>
    <dbReference type="NCBI Taxonomy" id="121845"/>
    <lineage>
        <taxon>Eukaryota</taxon>
        <taxon>Metazoa</taxon>
        <taxon>Ecdysozoa</taxon>
        <taxon>Arthropoda</taxon>
        <taxon>Hexapoda</taxon>
        <taxon>Insecta</taxon>
        <taxon>Pterygota</taxon>
        <taxon>Neoptera</taxon>
        <taxon>Paraneoptera</taxon>
        <taxon>Hemiptera</taxon>
        <taxon>Sternorrhyncha</taxon>
        <taxon>Psylloidea</taxon>
        <taxon>Psyllidae</taxon>
        <taxon>Diaphorininae</taxon>
        <taxon>Diaphorina</taxon>
    </lineage>
</organism>
<sequence length="188" mass="21649">MGVDICHKYDRRVRRTKPKSKDVYLELLVKLYRFLTRRTNSKFNKIILKRLFMSKINRPPMAISKIVRFMKKPTREGRVAVIVGTIVDDPRMWTIPKLTVCALRVTDKARSRILKAGGEIITFDQLALRAPTGKNTVLMQGKRTGREANKHFGPAPGVPHSHTKAHVRSKGRQFERARGRRTSKGYKK</sequence>
<gene>
    <name type="primary">RpL18</name>
</gene>
<protein>
    <recommendedName>
        <fullName evidence="3">Large ribosomal subunit protein eL18</fullName>
    </recommendedName>
    <alternativeName>
        <fullName>60S ribosomal protein L18</fullName>
    </alternativeName>
</protein>
<dbReference type="EMBL" id="DQ673400">
    <property type="protein sequence ID" value="ABG81973.1"/>
    <property type="molecule type" value="mRNA"/>
</dbReference>
<dbReference type="SMR" id="Q0PXY6"/>
<dbReference type="STRING" id="121845.Q0PXY6"/>
<dbReference type="PaxDb" id="121845-Q0PXY6"/>
<dbReference type="EnsemblMetazoa" id="XM_017445660.2">
    <property type="protein sequence ID" value="XP_017301149.1"/>
    <property type="gene ID" value="LOC108252857"/>
</dbReference>
<dbReference type="GeneID" id="108252857"/>
<dbReference type="KEGG" id="dci:108252857"/>
<dbReference type="CTD" id="6141"/>
<dbReference type="OMA" id="IDICHKN"/>
<dbReference type="OrthoDB" id="6353017at2759"/>
<dbReference type="Proteomes" id="UP000079169">
    <property type="component" value="Unplaced"/>
</dbReference>
<dbReference type="GO" id="GO:0022625">
    <property type="term" value="C:cytosolic large ribosomal subunit"/>
    <property type="evidence" value="ECO:0007669"/>
    <property type="project" value="TreeGrafter"/>
</dbReference>
<dbReference type="GO" id="GO:0003723">
    <property type="term" value="F:RNA binding"/>
    <property type="evidence" value="ECO:0007669"/>
    <property type="project" value="TreeGrafter"/>
</dbReference>
<dbReference type="GO" id="GO:0003735">
    <property type="term" value="F:structural constituent of ribosome"/>
    <property type="evidence" value="ECO:0007669"/>
    <property type="project" value="InterPro"/>
</dbReference>
<dbReference type="GO" id="GO:0006412">
    <property type="term" value="P:translation"/>
    <property type="evidence" value="ECO:0007669"/>
    <property type="project" value="InterPro"/>
</dbReference>
<dbReference type="FunFam" id="3.100.10.10:FF:000001">
    <property type="entry name" value="60S ribosomal protein L18"/>
    <property type="match status" value="1"/>
</dbReference>
<dbReference type="Gene3D" id="3.100.10.10">
    <property type="match status" value="1"/>
</dbReference>
<dbReference type="InterPro" id="IPR000039">
    <property type="entry name" value="Ribosomal_eL18"/>
</dbReference>
<dbReference type="InterPro" id="IPR021132">
    <property type="entry name" value="Ribosomal_eL18/eL18-A/B/_CS"/>
</dbReference>
<dbReference type="InterPro" id="IPR021131">
    <property type="entry name" value="Ribosomal_uL15/eL18"/>
</dbReference>
<dbReference type="InterPro" id="IPR036227">
    <property type="entry name" value="Ribosomal_uL15/eL18_sf"/>
</dbReference>
<dbReference type="PANTHER" id="PTHR10934">
    <property type="entry name" value="60S RIBOSOMAL PROTEIN L18"/>
    <property type="match status" value="1"/>
</dbReference>
<dbReference type="PANTHER" id="PTHR10934:SF2">
    <property type="entry name" value="LARGE RIBOSOMAL SUBUNIT PROTEIN EL18"/>
    <property type="match status" value="1"/>
</dbReference>
<dbReference type="Pfam" id="PF17135">
    <property type="entry name" value="Ribosomal_L18"/>
    <property type="match status" value="1"/>
</dbReference>
<dbReference type="SUPFAM" id="SSF52080">
    <property type="entry name" value="Ribosomal proteins L15p and L18e"/>
    <property type="match status" value="1"/>
</dbReference>
<dbReference type="PROSITE" id="PS01106">
    <property type="entry name" value="RIBOSOMAL_L18E"/>
    <property type="match status" value="1"/>
</dbReference>
<accession>Q0PXY6</accession>